<comment type="catalytic activity">
    <reaction evidence="1">
        <text>N-(5-phospho-beta-D-ribosyl)anthranilate = 1-(2-carboxyphenylamino)-1-deoxy-D-ribulose 5-phosphate</text>
        <dbReference type="Rhea" id="RHEA:21540"/>
        <dbReference type="ChEBI" id="CHEBI:18277"/>
        <dbReference type="ChEBI" id="CHEBI:58613"/>
        <dbReference type="EC" id="5.3.1.24"/>
    </reaction>
</comment>
<comment type="pathway">
    <text evidence="1">Amino-acid biosynthesis; L-tryptophan biosynthesis; L-tryptophan from chorismate: step 3/5.</text>
</comment>
<comment type="similarity">
    <text evidence="1">Belongs to the TrpF family.</text>
</comment>
<protein>
    <recommendedName>
        <fullName evidence="1">N-(5'-phosphoribosyl)anthranilate isomerase</fullName>
        <shortName evidence="1">PRAI</shortName>
        <ecNumber evidence="1">5.3.1.24</ecNumber>
    </recommendedName>
</protein>
<keyword id="KW-0028">Amino-acid biosynthesis</keyword>
<keyword id="KW-0057">Aromatic amino acid biosynthesis</keyword>
<keyword id="KW-0413">Isomerase</keyword>
<keyword id="KW-0822">Tryptophan biosynthesis</keyword>
<sequence length="204" mass="22777">MKVKICGITDMETAKRACEYGADALGFVFAESKRKITPGLAKEIIQELPANVLKIGVFVNESVEVIQKITENCGLTHVQLHGDEDNHQIRRLNIPSIKALGVTSEIDMKNAQAYKTDYILFDSPKERFHGGNGKKFSWELLAHMSKELREKTILAGGLNALNIEEAIRTVRPYMVDVSSGVETEGKKDVEKIKQFIIKAKECSK</sequence>
<feature type="chain" id="PRO_1000197080" description="N-(5'-phosphoribosyl)anthranilate isomerase">
    <location>
        <begin position="1"/>
        <end position="204"/>
    </location>
</feature>
<gene>
    <name evidence="1" type="primary">trpF</name>
    <name type="ordered locus">BCQ_1303</name>
</gene>
<accession>B9IU37</accession>
<organism>
    <name type="scientific">Bacillus cereus (strain Q1)</name>
    <dbReference type="NCBI Taxonomy" id="361100"/>
    <lineage>
        <taxon>Bacteria</taxon>
        <taxon>Bacillati</taxon>
        <taxon>Bacillota</taxon>
        <taxon>Bacilli</taxon>
        <taxon>Bacillales</taxon>
        <taxon>Bacillaceae</taxon>
        <taxon>Bacillus</taxon>
        <taxon>Bacillus cereus group</taxon>
    </lineage>
</organism>
<evidence type="ECO:0000255" key="1">
    <source>
        <dbReference type="HAMAP-Rule" id="MF_00135"/>
    </source>
</evidence>
<reference key="1">
    <citation type="journal article" date="2009" name="J. Bacteriol.">
        <title>Complete genome sequence of the extremophilic Bacillus cereus strain Q1 with industrial applications.</title>
        <authorList>
            <person name="Xiong Z."/>
            <person name="Jiang Y."/>
            <person name="Qi D."/>
            <person name="Lu H."/>
            <person name="Yang F."/>
            <person name="Yang J."/>
            <person name="Chen L."/>
            <person name="Sun L."/>
            <person name="Xu X."/>
            <person name="Xue Y."/>
            <person name="Zhu Y."/>
            <person name="Jin Q."/>
        </authorList>
    </citation>
    <scope>NUCLEOTIDE SEQUENCE [LARGE SCALE GENOMIC DNA]</scope>
    <source>
        <strain>Q1</strain>
    </source>
</reference>
<proteinExistence type="inferred from homology"/>
<name>TRPF_BACCQ</name>
<dbReference type="EC" id="5.3.1.24" evidence="1"/>
<dbReference type="EMBL" id="CP000227">
    <property type="protein sequence ID" value="ACM11733.1"/>
    <property type="molecule type" value="Genomic_DNA"/>
</dbReference>
<dbReference type="SMR" id="B9IU37"/>
<dbReference type="KEGG" id="bcq:BCQ_1303"/>
<dbReference type="HOGENOM" id="CLU_076364_1_0_9"/>
<dbReference type="UniPathway" id="UPA00035">
    <property type="reaction ID" value="UER00042"/>
</dbReference>
<dbReference type="Proteomes" id="UP000000441">
    <property type="component" value="Chromosome"/>
</dbReference>
<dbReference type="GO" id="GO:0004640">
    <property type="term" value="F:phosphoribosylanthranilate isomerase activity"/>
    <property type="evidence" value="ECO:0007669"/>
    <property type="project" value="UniProtKB-UniRule"/>
</dbReference>
<dbReference type="GO" id="GO:0000162">
    <property type="term" value="P:L-tryptophan biosynthetic process"/>
    <property type="evidence" value="ECO:0007669"/>
    <property type="project" value="UniProtKB-UniRule"/>
</dbReference>
<dbReference type="CDD" id="cd00405">
    <property type="entry name" value="PRAI"/>
    <property type="match status" value="1"/>
</dbReference>
<dbReference type="FunFam" id="3.20.20.70:FF:000075">
    <property type="entry name" value="Tryptophan biosynthesis protein TRP1"/>
    <property type="match status" value="1"/>
</dbReference>
<dbReference type="Gene3D" id="3.20.20.70">
    <property type="entry name" value="Aldolase class I"/>
    <property type="match status" value="1"/>
</dbReference>
<dbReference type="HAMAP" id="MF_00135">
    <property type="entry name" value="PRAI"/>
    <property type="match status" value="1"/>
</dbReference>
<dbReference type="InterPro" id="IPR013785">
    <property type="entry name" value="Aldolase_TIM"/>
</dbReference>
<dbReference type="InterPro" id="IPR001240">
    <property type="entry name" value="PRAI_dom"/>
</dbReference>
<dbReference type="InterPro" id="IPR011060">
    <property type="entry name" value="RibuloseP-bd_barrel"/>
</dbReference>
<dbReference type="InterPro" id="IPR044643">
    <property type="entry name" value="TrpF_fam"/>
</dbReference>
<dbReference type="NCBIfam" id="NF002297">
    <property type="entry name" value="PRK01222.1-3"/>
    <property type="match status" value="1"/>
</dbReference>
<dbReference type="NCBIfam" id="NF002298">
    <property type="entry name" value="PRK01222.1-4"/>
    <property type="match status" value="1"/>
</dbReference>
<dbReference type="PANTHER" id="PTHR42894">
    <property type="entry name" value="N-(5'-PHOSPHORIBOSYL)ANTHRANILATE ISOMERASE"/>
    <property type="match status" value="1"/>
</dbReference>
<dbReference type="PANTHER" id="PTHR42894:SF1">
    <property type="entry name" value="N-(5'-PHOSPHORIBOSYL)ANTHRANILATE ISOMERASE"/>
    <property type="match status" value="1"/>
</dbReference>
<dbReference type="Pfam" id="PF00697">
    <property type="entry name" value="PRAI"/>
    <property type="match status" value="1"/>
</dbReference>
<dbReference type="SUPFAM" id="SSF51366">
    <property type="entry name" value="Ribulose-phoshate binding barrel"/>
    <property type="match status" value="1"/>
</dbReference>